<keyword id="KW-0031">Aminopeptidase</keyword>
<keyword id="KW-0963">Cytoplasm</keyword>
<keyword id="KW-0378">Hydrolase</keyword>
<keyword id="KW-0479">Metal-binding</keyword>
<keyword id="KW-0645">Protease</keyword>
<keyword id="KW-1185">Reference proteome</keyword>
<evidence type="ECO:0000255" key="1">
    <source>
        <dbReference type="HAMAP-Rule" id="MF_03175"/>
    </source>
</evidence>
<evidence type="ECO:0000256" key="2">
    <source>
        <dbReference type="SAM" id="MobiDB-lite"/>
    </source>
</evidence>
<organism>
    <name type="scientific">Ajellomyces capsulatus (strain G186AR / H82 / ATCC MYA-2454 / RMSCC 2432)</name>
    <name type="common">Darling's disease fungus</name>
    <name type="synonym">Histoplasma capsulatum</name>
    <dbReference type="NCBI Taxonomy" id="447093"/>
    <lineage>
        <taxon>Eukaryota</taxon>
        <taxon>Fungi</taxon>
        <taxon>Dikarya</taxon>
        <taxon>Ascomycota</taxon>
        <taxon>Pezizomycotina</taxon>
        <taxon>Eurotiomycetes</taxon>
        <taxon>Eurotiomycetidae</taxon>
        <taxon>Onygenales</taxon>
        <taxon>Ajellomycetaceae</taxon>
        <taxon>Histoplasma</taxon>
    </lineage>
</organism>
<feature type="chain" id="PRO_0000407615" description="Methionine aminopeptidase 2-2">
    <location>
        <begin position="1"/>
        <end position="465"/>
    </location>
</feature>
<feature type="region of interest" description="Disordered" evidence="2">
    <location>
        <begin position="1"/>
        <end position="89"/>
    </location>
</feature>
<feature type="compositionally biased region" description="Basic residues" evidence="2">
    <location>
        <begin position="1"/>
        <end position="11"/>
    </location>
</feature>
<feature type="compositionally biased region" description="Acidic residues" evidence="2">
    <location>
        <begin position="43"/>
        <end position="54"/>
    </location>
</feature>
<feature type="compositionally biased region" description="Basic residues" evidence="2">
    <location>
        <begin position="73"/>
        <end position="84"/>
    </location>
</feature>
<feature type="binding site" evidence="1">
    <location>
        <position position="217"/>
    </location>
    <ligand>
        <name>substrate</name>
    </ligand>
</feature>
<feature type="binding site" evidence="1">
    <location>
        <position position="238"/>
    </location>
    <ligand>
        <name>a divalent metal cation</name>
        <dbReference type="ChEBI" id="CHEBI:60240"/>
        <label>1</label>
    </ligand>
</feature>
<feature type="binding site" evidence="1">
    <location>
        <position position="249"/>
    </location>
    <ligand>
        <name>a divalent metal cation</name>
        <dbReference type="ChEBI" id="CHEBI:60240"/>
        <label>1</label>
    </ligand>
</feature>
<feature type="binding site" evidence="1">
    <location>
        <position position="249"/>
    </location>
    <ligand>
        <name>a divalent metal cation</name>
        <dbReference type="ChEBI" id="CHEBI:60240"/>
        <label>2</label>
        <note>catalytic</note>
    </ligand>
</feature>
<feature type="binding site" evidence="1">
    <location>
        <position position="318"/>
    </location>
    <ligand>
        <name>a divalent metal cation</name>
        <dbReference type="ChEBI" id="CHEBI:60240"/>
        <label>2</label>
        <note>catalytic</note>
    </ligand>
</feature>
<feature type="binding site" evidence="1">
    <location>
        <position position="326"/>
    </location>
    <ligand>
        <name>substrate</name>
    </ligand>
</feature>
<feature type="binding site" evidence="1">
    <location>
        <position position="351"/>
    </location>
    <ligand>
        <name>a divalent metal cation</name>
        <dbReference type="ChEBI" id="CHEBI:60240"/>
        <label>2</label>
        <note>catalytic</note>
    </ligand>
</feature>
<feature type="binding site" evidence="1">
    <location>
        <position position="446"/>
    </location>
    <ligand>
        <name>a divalent metal cation</name>
        <dbReference type="ChEBI" id="CHEBI:60240"/>
        <label>1</label>
    </ligand>
</feature>
<feature type="binding site" evidence="1">
    <location>
        <position position="446"/>
    </location>
    <ligand>
        <name>a divalent metal cation</name>
        <dbReference type="ChEBI" id="CHEBI:60240"/>
        <label>2</label>
        <note>catalytic</note>
    </ligand>
</feature>
<name>MAP22_AJECG</name>
<comment type="function">
    <text evidence="1">Cotranslationally removes the N-terminal methionine from nascent proteins. The N-terminal methionine is often cleaved when the second residue in the primary sequence is small and uncharged (Met-Ala-, Cys, Gly, Pro, Ser, Thr, or Val).</text>
</comment>
<comment type="catalytic activity">
    <reaction evidence="1">
        <text>Release of N-terminal amino acids, preferentially methionine, from peptides and arylamides.</text>
        <dbReference type="EC" id="3.4.11.18"/>
    </reaction>
</comment>
<comment type="cofactor">
    <cofactor evidence="1">
        <name>Co(2+)</name>
        <dbReference type="ChEBI" id="CHEBI:48828"/>
    </cofactor>
    <cofactor evidence="1">
        <name>Zn(2+)</name>
        <dbReference type="ChEBI" id="CHEBI:29105"/>
    </cofactor>
    <cofactor evidence="1">
        <name>Mn(2+)</name>
        <dbReference type="ChEBI" id="CHEBI:29035"/>
    </cofactor>
    <cofactor evidence="1">
        <name>Fe(2+)</name>
        <dbReference type="ChEBI" id="CHEBI:29033"/>
    </cofactor>
    <text evidence="1">Binds 2 divalent metal cations per subunit. Has a high-affinity and a low affinity metal-binding site. The true nature of the physiological cofactor is under debate. The enzyme is active with cobalt, zinc, manganese or divalent iron ions. Most likely, methionine aminopeptidases function as mononuclear Fe(2+)-metalloproteases under physiological conditions, and the catalytically relevant metal-binding site has been assigned to the histidine-containing high-affinity site.</text>
</comment>
<comment type="subcellular location">
    <subcellularLocation>
        <location evidence="1">Cytoplasm</location>
    </subcellularLocation>
</comment>
<comment type="similarity">
    <text evidence="1">Belongs to the peptidase M24A family. Methionine aminopeptidase eukaryotic type 2 subfamily.</text>
</comment>
<reference key="1">
    <citation type="submission" date="2009-02" db="EMBL/GenBank/DDBJ databases">
        <title>The genome sequence of Ajellomyces capsulatus strain G186AR.</title>
        <authorList>
            <person name="Champion M."/>
            <person name="Cuomo C.A."/>
            <person name="Ma L.-J."/>
            <person name="Henn M.R."/>
            <person name="Sil A."/>
            <person name="Goldman B."/>
            <person name="Young S.K."/>
            <person name="Kodira C.D."/>
            <person name="Zeng Q."/>
            <person name="Koehrsen M."/>
            <person name="Alvarado L."/>
            <person name="Berlin A."/>
            <person name="Borenstein D."/>
            <person name="Chen Z."/>
            <person name="Engels R."/>
            <person name="Freedman E."/>
            <person name="Gellesch M."/>
            <person name="Goldberg J."/>
            <person name="Griggs A."/>
            <person name="Gujja S."/>
            <person name="Heiman D."/>
            <person name="Hepburn T."/>
            <person name="Howarth C."/>
            <person name="Jen D."/>
            <person name="Larson L."/>
            <person name="Lewis B."/>
            <person name="Mehta T."/>
            <person name="Park D."/>
            <person name="Pearson M."/>
            <person name="Roberts A."/>
            <person name="Saif S."/>
            <person name="Shea T."/>
            <person name="Shenoy N."/>
            <person name="Sisk P."/>
            <person name="Stolte C."/>
            <person name="Sykes S."/>
            <person name="Walk T."/>
            <person name="White J."/>
            <person name="Yandava C."/>
            <person name="Klein B."/>
            <person name="McEwen J.G."/>
            <person name="Puccia R."/>
            <person name="Goldman G.H."/>
            <person name="Felipe M.S."/>
            <person name="Nino-Vega G."/>
            <person name="San-Blas G."/>
            <person name="Taylor J."/>
            <person name="Mendoza L."/>
            <person name="Galagan J.E."/>
            <person name="Nusbaum C."/>
            <person name="Birren B.W."/>
        </authorList>
    </citation>
    <scope>NUCLEOTIDE SEQUENCE [LARGE SCALE GENOMIC DNA]</scope>
    <source>
        <strain>G186AR / H82 / ATCC MYA-2454 / RMSCC 2432</strain>
    </source>
</reference>
<accession>C0NX86</accession>
<sequence length="465" mass="51413">MGSKTPHNHRRGPNESSSPPAIDAINPPKQAAASGLVHGSLEGESEGGEDEDDDKPGADLKAVGQIGNDGQKRNKRKKKKKKKNTKELEILQTTPPRVALANIFRSQRYPEAEIVKYSTDNDNLQRTTTEELRHLSVLNAMDDEFLNDYRKAAEVHRQVRQYVQTIIKPGIALSQLAPEIEDGVRALTNHQGLETGDALKAGMAFPTGLCLNNIAAHWTPNPGAKEVILQYDDVLKIDFGVHVNGRIVDSAFTMAFNPVYDNLLAAVKDATNAGLKEAGIDSRIAHISEAIQEVMESYEVELNRKVIPVKAVRNITGHNILHYKIHGDKQVPFVKTQTNQRMEEGDVFAIETFGSTGKAYLDDATGIYGYGYDENSSTTGLHHSSAKSLLKTIKENFGTLVFSRRYLERLGVQRYHLGMRSLVTNGIVQSYAPLVDVPGSYVAQFEHTVLLRPNCKEVISRGDDY</sequence>
<protein>
    <recommendedName>
        <fullName evidence="1">Methionine aminopeptidase 2-2</fullName>
        <shortName evidence="1">MAP 2-2</shortName>
        <shortName evidence="1">MetAP 2-2</shortName>
        <ecNumber evidence="1">3.4.11.18</ecNumber>
    </recommendedName>
    <alternativeName>
        <fullName evidence="1">Peptidase M</fullName>
    </alternativeName>
</protein>
<proteinExistence type="inferred from homology"/>
<gene>
    <name type="ORF">HCBG_08078</name>
</gene>
<dbReference type="EC" id="3.4.11.18" evidence="1"/>
<dbReference type="EMBL" id="GG663375">
    <property type="protein sequence ID" value="EEH03952.1"/>
    <property type="molecule type" value="Genomic_DNA"/>
</dbReference>
<dbReference type="RefSeq" id="XP_045284433.1">
    <property type="nucleotide sequence ID" value="XM_045435127.1"/>
</dbReference>
<dbReference type="SMR" id="C0NX86"/>
<dbReference type="STRING" id="447093.C0NX86"/>
<dbReference type="GeneID" id="69041094"/>
<dbReference type="VEuPathDB" id="FungiDB:I7I50_08339"/>
<dbReference type="HOGENOM" id="CLU_015857_7_1_1"/>
<dbReference type="InParanoid" id="C0NX86"/>
<dbReference type="Proteomes" id="UP000001631">
    <property type="component" value="Unassembled WGS sequence"/>
</dbReference>
<dbReference type="GO" id="GO:0005737">
    <property type="term" value="C:cytoplasm"/>
    <property type="evidence" value="ECO:0007669"/>
    <property type="project" value="UniProtKB-SubCell"/>
</dbReference>
<dbReference type="GO" id="GO:0004239">
    <property type="term" value="F:initiator methionyl aminopeptidase activity"/>
    <property type="evidence" value="ECO:0007669"/>
    <property type="project" value="UniProtKB-UniRule"/>
</dbReference>
<dbReference type="GO" id="GO:0046872">
    <property type="term" value="F:metal ion binding"/>
    <property type="evidence" value="ECO:0007669"/>
    <property type="project" value="UniProtKB-UniRule"/>
</dbReference>
<dbReference type="GO" id="GO:0070006">
    <property type="term" value="F:metalloaminopeptidase activity"/>
    <property type="evidence" value="ECO:0007669"/>
    <property type="project" value="UniProtKB-UniRule"/>
</dbReference>
<dbReference type="GO" id="GO:0006508">
    <property type="term" value="P:proteolysis"/>
    <property type="evidence" value="ECO:0007669"/>
    <property type="project" value="UniProtKB-KW"/>
</dbReference>
<dbReference type="CDD" id="cd01088">
    <property type="entry name" value="MetAP2"/>
    <property type="match status" value="1"/>
</dbReference>
<dbReference type="Gene3D" id="3.90.230.10">
    <property type="entry name" value="Creatinase/methionine aminopeptidase superfamily"/>
    <property type="match status" value="1"/>
</dbReference>
<dbReference type="Gene3D" id="1.10.10.10">
    <property type="entry name" value="Winged helix-like DNA-binding domain superfamily/Winged helix DNA-binding domain"/>
    <property type="match status" value="1"/>
</dbReference>
<dbReference type="HAMAP" id="MF_03175">
    <property type="entry name" value="MetAP_2_euk"/>
    <property type="match status" value="1"/>
</dbReference>
<dbReference type="InterPro" id="IPR036005">
    <property type="entry name" value="Creatinase/aminopeptidase-like"/>
</dbReference>
<dbReference type="InterPro" id="IPR050247">
    <property type="entry name" value="Met_Aminopeptidase_Type2"/>
</dbReference>
<dbReference type="InterPro" id="IPR000994">
    <property type="entry name" value="Pept_M24"/>
</dbReference>
<dbReference type="InterPro" id="IPR001714">
    <property type="entry name" value="Pept_M24_MAP"/>
</dbReference>
<dbReference type="InterPro" id="IPR002468">
    <property type="entry name" value="Pept_M24A_MAP2"/>
</dbReference>
<dbReference type="InterPro" id="IPR018349">
    <property type="entry name" value="Pept_M24A_MAP2_BS"/>
</dbReference>
<dbReference type="InterPro" id="IPR036388">
    <property type="entry name" value="WH-like_DNA-bd_sf"/>
</dbReference>
<dbReference type="InterPro" id="IPR036390">
    <property type="entry name" value="WH_DNA-bd_sf"/>
</dbReference>
<dbReference type="NCBIfam" id="TIGR00501">
    <property type="entry name" value="met_pdase_II"/>
    <property type="match status" value="1"/>
</dbReference>
<dbReference type="PANTHER" id="PTHR45777">
    <property type="entry name" value="METHIONINE AMINOPEPTIDASE 2"/>
    <property type="match status" value="1"/>
</dbReference>
<dbReference type="PANTHER" id="PTHR45777:SF1">
    <property type="entry name" value="METHIONINE AMINOPEPTIDASE 2-2"/>
    <property type="match status" value="1"/>
</dbReference>
<dbReference type="Pfam" id="PF00557">
    <property type="entry name" value="Peptidase_M24"/>
    <property type="match status" value="1"/>
</dbReference>
<dbReference type="PRINTS" id="PR00599">
    <property type="entry name" value="MAPEPTIDASE"/>
</dbReference>
<dbReference type="SUPFAM" id="SSF55920">
    <property type="entry name" value="Creatinase/aminopeptidase"/>
    <property type="match status" value="1"/>
</dbReference>
<dbReference type="SUPFAM" id="SSF46785">
    <property type="entry name" value="Winged helix' DNA-binding domain"/>
    <property type="match status" value="1"/>
</dbReference>
<dbReference type="PROSITE" id="PS01202">
    <property type="entry name" value="MAP_2"/>
    <property type="match status" value="1"/>
</dbReference>